<dbReference type="EMBL" id="CP000453">
    <property type="protein sequence ID" value="ABI55835.1"/>
    <property type="molecule type" value="Genomic_DNA"/>
</dbReference>
<dbReference type="RefSeq" id="WP_011628230.1">
    <property type="nucleotide sequence ID" value="NC_008340.1"/>
</dbReference>
<dbReference type="SMR" id="Q0ABF2"/>
<dbReference type="KEGG" id="aeh:Mlg_0481"/>
<dbReference type="eggNOG" id="COG0100">
    <property type="taxonomic scope" value="Bacteria"/>
</dbReference>
<dbReference type="HOGENOM" id="CLU_072439_5_0_6"/>
<dbReference type="OrthoDB" id="9806415at2"/>
<dbReference type="Proteomes" id="UP000001962">
    <property type="component" value="Chromosome"/>
</dbReference>
<dbReference type="GO" id="GO:1990904">
    <property type="term" value="C:ribonucleoprotein complex"/>
    <property type="evidence" value="ECO:0007669"/>
    <property type="project" value="UniProtKB-KW"/>
</dbReference>
<dbReference type="GO" id="GO:0005840">
    <property type="term" value="C:ribosome"/>
    <property type="evidence" value="ECO:0007669"/>
    <property type="project" value="UniProtKB-KW"/>
</dbReference>
<dbReference type="GO" id="GO:0019843">
    <property type="term" value="F:rRNA binding"/>
    <property type="evidence" value="ECO:0007669"/>
    <property type="project" value="UniProtKB-UniRule"/>
</dbReference>
<dbReference type="GO" id="GO:0003735">
    <property type="term" value="F:structural constituent of ribosome"/>
    <property type="evidence" value="ECO:0007669"/>
    <property type="project" value="InterPro"/>
</dbReference>
<dbReference type="GO" id="GO:0006412">
    <property type="term" value="P:translation"/>
    <property type="evidence" value="ECO:0007669"/>
    <property type="project" value="UniProtKB-UniRule"/>
</dbReference>
<dbReference type="FunFam" id="3.30.420.80:FF:000001">
    <property type="entry name" value="30S ribosomal protein S11"/>
    <property type="match status" value="1"/>
</dbReference>
<dbReference type="Gene3D" id="3.30.420.80">
    <property type="entry name" value="Ribosomal protein S11"/>
    <property type="match status" value="1"/>
</dbReference>
<dbReference type="HAMAP" id="MF_01310">
    <property type="entry name" value="Ribosomal_uS11"/>
    <property type="match status" value="1"/>
</dbReference>
<dbReference type="InterPro" id="IPR001971">
    <property type="entry name" value="Ribosomal_uS11"/>
</dbReference>
<dbReference type="InterPro" id="IPR019981">
    <property type="entry name" value="Ribosomal_uS11_bac-type"/>
</dbReference>
<dbReference type="InterPro" id="IPR018102">
    <property type="entry name" value="Ribosomal_uS11_CS"/>
</dbReference>
<dbReference type="InterPro" id="IPR036967">
    <property type="entry name" value="Ribosomal_uS11_sf"/>
</dbReference>
<dbReference type="NCBIfam" id="NF003698">
    <property type="entry name" value="PRK05309.1"/>
    <property type="match status" value="1"/>
</dbReference>
<dbReference type="NCBIfam" id="TIGR03632">
    <property type="entry name" value="uS11_bact"/>
    <property type="match status" value="1"/>
</dbReference>
<dbReference type="PANTHER" id="PTHR11759">
    <property type="entry name" value="40S RIBOSOMAL PROTEIN S14/30S RIBOSOMAL PROTEIN S11"/>
    <property type="match status" value="1"/>
</dbReference>
<dbReference type="Pfam" id="PF00411">
    <property type="entry name" value="Ribosomal_S11"/>
    <property type="match status" value="1"/>
</dbReference>
<dbReference type="PIRSF" id="PIRSF002131">
    <property type="entry name" value="Ribosomal_S11"/>
    <property type="match status" value="1"/>
</dbReference>
<dbReference type="SUPFAM" id="SSF53137">
    <property type="entry name" value="Translational machinery components"/>
    <property type="match status" value="1"/>
</dbReference>
<dbReference type="PROSITE" id="PS00054">
    <property type="entry name" value="RIBOSOMAL_S11"/>
    <property type="match status" value="1"/>
</dbReference>
<accession>Q0ABF2</accession>
<protein>
    <recommendedName>
        <fullName evidence="1">Small ribosomal subunit protein uS11</fullName>
    </recommendedName>
    <alternativeName>
        <fullName evidence="2">30S ribosomal protein S11</fullName>
    </alternativeName>
</protein>
<evidence type="ECO:0000255" key="1">
    <source>
        <dbReference type="HAMAP-Rule" id="MF_01310"/>
    </source>
</evidence>
<evidence type="ECO:0000305" key="2"/>
<feature type="chain" id="PRO_0000294710" description="Small ribosomal subunit protein uS11">
    <location>
        <begin position="1"/>
        <end position="130"/>
    </location>
</feature>
<reference key="1">
    <citation type="submission" date="2006-08" db="EMBL/GenBank/DDBJ databases">
        <title>Complete sequence of Alkalilimnicola ehrilichei MLHE-1.</title>
        <authorList>
            <person name="Copeland A."/>
            <person name="Lucas S."/>
            <person name="Lapidus A."/>
            <person name="Barry K."/>
            <person name="Detter J.C."/>
            <person name="Glavina del Rio T."/>
            <person name="Hammon N."/>
            <person name="Israni S."/>
            <person name="Dalin E."/>
            <person name="Tice H."/>
            <person name="Pitluck S."/>
            <person name="Sims D."/>
            <person name="Brettin T."/>
            <person name="Bruce D."/>
            <person name="Han C."/>
            <person name="Tapia R."/>
            <person name="Gilna P."/>
            <person name="Schmutz J."/>
            <person name="Larimer F."/>
            <person name="Land M."/>
            <person name="Hauser L."/>
            <person name="Kyrpides N."/>
            <person name="Mikhailova N."/>
            <person name="Oremland R.S."/>
            <person name="Hoeft S.E."/>
            <person name="Switzer-Blum J."/>
            <person name="Kulp T."/>
            <person name="King G."/>
            <person name="Tabita R."/>
            <person name="Witte B."/>
            <person name="Santini J.M."/>
            <person name="Basu P."/>
            <person name="Hollibaugh J.T."/>
            <person name="Xie G."/>
            <person name="Stolz J.F."/>
            <person name="Richardson P."/>
        </authorList>
    </citation>
    <scope>NUCLEOTIDE SEQUENCE [LARGE SCALE GENOMIC DNA]</scope>
    <source>
        <strain>ATCC BAA-1101 / DSM 17681 / MLHE-1</strain>
    </source>
</reference>
<comment type="function">
    <text evidence="1">Located on the platform of the 30S subunit, it bridges several disparate RNA helices of the 16S rRNA. Forms part of the Shine-Dalgarno cleft in the 70S ribosome.</text>
</comment>
<comment type="subunit">
    <text evidence="1">Part of the 30S ribosomal subunit. Interacts with proteins S7 and S18. Binds to IF-3.</text>
</comment>
<comment type="similarity">
    <text evidence="1">Belongs to the universal ribosomal protein uS11 family.</text>
</comment>
<organism>
    <name type="scientific">Alkalilimnicola ehrlichii (strain ATCC BAA-1101 / DSM 17681 / MLHE-1)</name>
    <dbReference type="NCBI Taxonomy" id="187272"/>
    <lineage>
        <taxon>Bacteria</taxon>
        <taxon>Pseudomonadati</taxon>
        <taxon>Pseudomonadota</taxon>
        <taxon>Gammaproteobacteria</taxon>
        <taxon>Chromatiales</taxon>
        <taxon>Ectothiorhodospiraceae</taxon>
        <taxon>Alkalilimnicola</taxon>
    </lineage>
</organism>
<keyword id="KW-1185">Reference proteome</keyword>
<keyword id="KW-0687">Ribonucleoprotein</keyword>
<keyword id="KW-0689">Ribosomal protein</keyword>
<keyword id="KW-0694">RNA-binding</keyword>
<keyword id="KW-0699">rRNA-binding</keyword>
<name>RS11_ALKEH</name>
<gene>
    <name evidence="1" type="primary">rpsK</name>
    <name type="ordered locus">Mlg_0481</name>
</gene>
<sequence>MAKAATRSRTKRAKRTVVDGIAHINATFNNTIITITDRQGNGLAWASAGGSGFRGSRKSTPFAAQVASERAGRAALDYGLKNLEVRVKGPGPGRESAVRALNAVGYRITNISDVSPIPHNGCRPPKKRRV</sequence>
<proteinExistence type="inferred from homology"/>